<dbReference type="EMBL" id="L36814">
    <property type="protein sequence ID" value="AAA66954.1"/>
    <property type="molecule type" value="mRNA"/>
</dbReference>
<dbReference type="EMBL" id="U47275">
    <property type="protein sequence ID" value="AAB08466.1"/>
    <property type="molecule type" value="mRNA"/>
</dbReference>
<dbReference type="PIR" id="A55909">
    <property type="entry name" value="A55909"/>
</dbReference>
<dbReference type="RefSeq" id="NP_990524.1">
    <property type="nucleotide sequence ID" value="NM_205193.1"/>
</dbReference>
<dbReference type="SMR" id="Q90964"/>
<dbReference type="BioGRID" id="676376">
    <property type="interactions" value="1"/>
</dbReference>
<dbReference type="STRING" id="9031.ENSGALP00000054672"/>
<dbReference type="PaxDb" id="9031-ENSGALP00000015999"/>
<dbReference type="Ensembl" id="ENSGALT00010016281.1">
    <property type="protein sequence ID" value="ENSGALP00010009299.1"/>
    <property type="gene ID" value="ENSGALG00010006854.1"/>
</dbReference>
<dbReference type="GeneID" id="396110"/>
<dbReference type="KEGG" id="gga:396110"/>
<dbReference type="CTD" id="2290"/>
<dbReference type="VEuPathDB" id="HostDB:geneid_396110"/>
<dbReference type="eggNOG" id="KOG2294">
    <property type="taxonomic scope" value="Eukaryota"/>
</dbReference>
<dbReference type="GeneTree" id="ENSGT00940000160678"/>
<dbReference type="InParanoid" id="Q90964"/>
<dbReference type="OMA" id="AHPMSYS"/>
<dbReference type="OrthoDB" id="5954824at2759"/>
<dbReference type="PhylomeDB" id="Q90964"/>
<dbReference type="Reactome" id="R-GGA-9617828">
    <property type="pathway name" value="FOXO-mediated transcription of cell cycle genes"/>
</dbReference>
<dbReference type="PRO" id="PR:Q90964"/>
<dbReference type="Proteomes" id="UP000000539">
    <property type="component" value="Chromosome 5"/>
</dbReference>
<dbReference type="Bgee" id="ENSGALG00000036364">
    <property type="expression patterns" value="Expressed in brain"/>
</dbReference>
<dbReference type="GO" id="GO:0005634">
    <property type="term" value="C:nucleus"/>
    <property type="evidence" value="ECO:0000318"/>
    <property type="project" value="GO_Central"/>
</dbReference>
<dbReference type="GO" id="GO:0003700">
    <property type="term" value="F:DNA-binding transcription factor activity"/>
    <property type="evidence" value="ECO:0007669"/>
    <property type="project" value="InterPro"/>
</dbReference>
<dbReference type="GO" id="GO:1990837">
    <property type="term" value="F:sequence-specific double-stranded DNA binding"/>
    <property type="evidence" value="ECO:0000318"/>
    <property type="project" value="GO_Central"/>
</dbReference>
<dbReference type="GO" id="GO:0016199">
    <property type="term" value="P:axon midline choice point recognition"/>
    <property type="evidence" value="ECO:0007669"/>
    <property type="project" value="Ensembl"/>
</dbReference>
<dbReference type="GO" id="GO:0009953">
    <property type="term" value="P:dorsal/ventral pattern formation"/>
    <property type="evidence" value="ECO:0007669"/>
    <property type="project" value="Ensembl"/>
</dbReference>
<dbReference type="GO" id="GO:0042472">
    <property type="term" value="P:inner ear morphogenesis"/>
    <property type="evidence" value="ECO:0007669"/>
    <property type="project" value="Ensembl"/>
</dbReference>
<dbReference type="GO" id="GO:0045665">
    <property type="term" value="P:negative regulation of neuron differentiation"/>
    <property type="evidence" value="ECO:0007669"/>
    <property type="project" value="Ensembl"/>
</dbReference>
<dbReference type="GO" id="GO:0000122">
    <property type="term" value="P:negative regulation of transcription by RNA polymerase II"/>
    <property type="evidence" value="ECO:0007669"/>
    <property type="project" value="Ensembl"/>
</dbReference>
<dbReference type="GO" id="GO:0007405">
    <property type="term" value="P:neuroblast proliferation"/>
    <property type="evidence" value="ECO:0007669"/>
    <property type="project" value="Ensembl"/>
</dbReference>
<dbReference type="GO" id="GO:0048664">
    <property type="term" value="P:neuron fate determination"/>
    <property type="evidence" value="ECO:0007669"/>
    <property type="project" value="Ensembl"/>
</dbReference>
<dbReference type="GO" id="GO:0045787">
    <property type="term" value="P:positive regulation of cell cycle"/>
    <property type="evidence" value="ECO:0007669"/>
    <property type="project" value="Ensembl"/>
</dbReference>
<dbReference type="GO" id="GO:0002052">
    <property type="term" value="P:positive regulation of neuroblast proliferation"/>
    <property type="evidence" value="ECO:0007669"/>
    <property type="project" value="Ensembl"/>
</dbReference>
<dbReference type="GO" id="GO:0045666">
    <property type="term" value="P:positive regulation of neuron differentiation"/>
    <property type="evidence" value="ECO:0007669"/>
    <property type="project" value="Ensembl"/>
</dbReference>
<dbReference type="GO" id="GO:0021852">
    <property type="term" value="P:pyramidal neuron migration to cerebral cortex"/>
    <property type="evidence" value="ECO:0007669"/>
    <property type="project" value="Ensembl"/>
</dbReference>
<dbReference type="GO" id="GO:0007346">
    <property type="term" value="P:regulation of mitotic cell cycle"/>
    <property type="evidence" value="ECO:0007669"/>
    <property type="project" value="Ensembl"/>
</dbReference>
<dbReference type="GO" id="GO:0006357">
    <property type="term" value="P:regulation of transcription by RNA polymerase II"/>
    <property type="evidence" value="ECO:0000318"/>
    <property type="project" value="GO_Central"/>
</dbReference>
<dbReference type="CDD" id="cd20021">
    <property type="entry name" value="FH_FOXG"/>
    <property type="match status" value="1"/>
</dbReference>
<dbReference type="FunFam" id="1.10.10.10:FF:000135">
    <property type="entry name" value="forkhead box protein G1"/>
    <property type="match status" value="1"/>
</dbReference>
<dbReference type="Gene3D" id="1.10.10.10">
    <property type="entry name" value="Winged helix-like DNA-binding domain superfamily/Winged helix DNA-binding domain"/>
    <property type="match status" value="1"/>
</dbReference>
<dbReference type="InterPro" id="IPR001766">
    <property type="entry name" value="Fork_head_dom"/>
</dbReference>
<dbReference type="InterPro" id="IPR047208">
    <property type="entry name" value="FOXG1"/>
</dbReference>
<dbReference type="InterPro" id="IPR018122">
    <property type="entry name" value="TF_fork_head_CS_1"/>
</dbReference>
<dbReference type="InterPro" id="IPR030456">
    <property type="entry name" value="TF_fork_head_CS_2"/>
</dbReference>
<dbReference type="InterPro" id="IPR036388">
    <property type="entry name" value="WH-like_DNA-bd_sf"/>
</dbReference>
<dbReference type="InterPro" id="IPR036390">
    <property type="entry name" value="WH_DNA-bd_sf"/>
</dbReference>
<dbReference type="PANTHER" id="PTHR46617">
    <property type="entry name" value="FORKHEAD BOX PROTEIN G1"/>
    <property type="match status" value="1"/>
</dbReference>
<dbReference type="PANTHER" id="PTHR46617:SF3">
    <property type="entry name" value="FORKHEAD BOX PROTEIN G1"/>
    <property type="match status" value="1"/>
</dbReference>
<dbReference type="Pfam" id="PF00250">
    <property type="entry name" value="Forkhead"/>
    <property type="match status" value="1"/>
</dbReference>
<dbReference type="PRINTS" id="PR00053">
    <property type="entry name" value="FORKHEAD"/>
</dbReference>
<dbReference type="SMART" id="SM00339">
    <property type="entry name" value="FH"/>
    <property type="match status" value="1"/>
</dbReference>
<dbReference type="SUPFAM" id="SSF46785">
    <property type="entry name" value="Winged helix' DNA-binding domain"/>
    <property type="match status" value="1"/>
</dbReference>
<dbReference type="PROSITE" id="PS00657">
    <property type="entry name" value="FORK_HEAD_1"/>
    <property type="match status" value="1"/>
</dbReference>
<dbReference type="PROSITE" id="PS00658">
    <property type="entry name" value="FORK_HEAD_2"/>
    <property type="match status" value="1"/>
</dbReference>
<dbReference type="PROSITE" id="PS50039">
    <property type="entry name" value="FORK_HEAD_3"/>
    <property type="match status" value="1"/>
</dbReference>
<evidence type="ECO:0000255" key="1">
    <source>
        <dbReference type="PROSITE-ProRule" id="PRU00089"/>
    </source>
</evidence>
<evidence type="ECO:0000256" key="2">
    <source>
        <dbReference type="SAM" id="MobiDB-lite"/>
    </source>
</evidence>
<accession>Q90964</accession>
<comment type="function">
    <text>May determine the nasotemporal axis of the retina, and consequently specify the topographical projection of the retinal ganglion-cell axons to the tectum by controlling expression of their target genes.</text>
</comment>
<comment type="subcellular location">
    <subcellularLocation>
        <location evidence="1">Nucleus</location>
    </subcellularLocation>
</comment>
<comment type="tissue specificity">
    <text>Retina and brain.</text>
</comment>
<comment type="developmental stage">
    <text>Can be detected in regions including primordial retina and neuroepithelium by embryonic day 2 (2dpc). At 3 dpc, expressed in the nasal retina and pigment epithelium as well as in the telencephalon, and at 7 dpc is expressed in retinal ganglion cells. Levels begin to decline from 4 dpc and almost disappear by 10 dpc.</text>
</comment>
<protein>
    <recommendedName>
        <fullName>Forkhead box protein G1</fullName>
        <shortName>FoxG1</shortName>
    </recommendedName>
    <alternativeName>
        <fullName>Brain factor 1</fullName>
        <shortName>BF-1</shortName>
        <shortName>BF1</shortName>
        <shortName>cBF-1</shortName>
    </alternativeName>
    <alternativeName>
        <fullName>CEQ 3-1</fullName>
    </alternativeName>
    <alternativeName>
        <fullName>Forkhead-related protein FKHL1</fullName>
    </alternativeName>
    <alternativeName>
        <fullName>N-62-5</fullName>
    </alternativeName>
    <alternativeName>
        <fullName>Proto-oncogene C-QIN</fullName>
    </alternativeName>
</protein>
<sequence>MLDMGDRKEVKMLPKSSFSINSLVPEAVQSDNHSGHSHHNSHHPHHHHHHHHHHPPPPQQPQRAAAAEEEDEEKAPLLLPPPAAGALEAAKAEALAGKGEAGAAAAELEEKEKAAEEKKGAAEGGKDGESGKEGEKKNGKYEKPPFSYNALIMMAIRQSPEKRLTLNGIYEFIMKNFPYYRENKQGWQNSIRHNLSLNKCFVKVPRHYDDPGKGNYWMLDPSSDDVFIGGTTGKLRRRSTTSRAKLAFKRGARLTSTGLTFMDRAGSLYWPMSPFLSLHHPRASSTLSYNGTASAYPSHPMPYSSVLTQNSLGNNHSFSTSNGLSVDRLVNGEIPYATHHLTAAALAASVPCGLSVPCSGTYSLNPCSVNLLAGQTSYFFPHVPHPSMTSQSSTSMTARAASSSTSPQAPSTLPCESLRPSLPSFTTGLSGGLSDYFTHQNQGSSSNPLIH</sequence>
<proteinExistence type="evidence at transcript level"/>
<feature type="chain" id="PRO_0000091839" description="Forkhead box protein G1">
    <location>
        <begin position="1"/>
        <end position="451"/>
    </location>
</feature>
<feature type="DNA-binding region" description="Fork-head" evidence="1">
    <location>
        <begin position="142"/>
        <end position="233"/>
    </location>
</feature>
<feature type="region of interest" description="Disordered" evidence="2">
    <location>
        <begin position="29"/>
        <end position="80"/>
    </location>
</feature>
<feature type="region of interest" description="Disordered" evidence="2">
    <location>
        <begin position="101"/>
        <end position="143"/>
    </location>
</feature>
<feature type="region of interest" description="Disordered" evidence="2">
    <location>
        <begin position="389"/>
        <end position="417"/>
    </location>
</feature>
<feature type="compositionally biased region" description="Basic residues" evidence="2">
    <location>
        <begin position="35"/>
        <end position="55"/>
    </location>
</feature>
<feature type="compositionally biased region" description="Basic and acidic residues" evidence="2">
    <location>
        <begin position="108"/>
        <end position="143"/>
    </location>
</feature>
<feature type="compositionally biased region" description="Low complexity" evidence="2">
    <location>
        <begin position="389"/>
        <end position="412"/>
    </location>
</feature>
<organism>
    <name type="scientific">Gallus gallus</name>
    <name type="common">Chicken</name>
    <dbReference type="NCBI Taxonomy" id="9031"/>
    <lineage>
        <taxon>Eukaryota</taxon>
        <taxon>Metazoa</taxon>
        <taxon>Chordata</taxon>
        <taxon>Craniata</taxon>
        <taxon>Vertebrata</taxon>
        <taxon>Euteleostomi</taxon>
        <taxon>Archelosauria</taxon>
        <taxon>Archosauria</taxon>
        <taxon>Dinosauria</taxon>
        <taxon>Saurischia</taxon>
        <taxon>Theropoda</taxon>
        <taxon>Coelurosauria</taxon>
        <taxon>Aves</taxon>
        <taxon>Neognathae</taxon>
        <taxon>Galloanserae</taxon>
        <taxon>Galliformes</taxon>
        <taxon>Phasianidae</taxon>
        <taxon>Phasianinae</taxon>
        <taxon>Gallus</taxon>
    </lineage>
</organism>
<gene>
    <name type="primary">FOXG1</name>
    <name type="synonym">FKHL1</name>
    <name type="synonym">FOXG1B</name>
    <name type="synonym">QIN</name>
</gene>
<name>FOXG1_CHICK</name>
<reference key="1">
    <citation type="journal article" date="1995" name="Proc. Natl. Acad. Sci. U.S.A.">
        <title>Avian cellular homolog of the qin oncogene.</title>
        <authorList>
            <person name="Chang H.W."/>
            <person name="Li J."/>
            <person name="Kretzschmar D."/>
            <person name="Vogt P.K."/>
        </authorList>
    </citation>
    <scope>NUCLEOTIDE SEQUENCE [MRNA]</scope>
</reference>
<reference key="2">
    <citation type="journal article" date="1996" name="Nature">
        <title>Visual projection map specified by topographic expression of transcription factors in the retina.</title>
        <authorList>
            <person name="Yuasa J."/>
            <person name="Hirano S."/>
            <person name="Yamagata M."/>
            <person name="Noda M."/>
        </authorList>
    </citation>
    <scope>NUCLEOTIDE SEQUENCE [MRNA]</scope>
    <source>
        <strain>White leghorn</strain>
        <tissue>Retina</tissue>
    </source>
</reference>
<keyword id="KW-0217">Developmental protein</keyword>
<keyword id="KW-0238">DNA-binding</keyword>
<keyword id="KW-0539">Nucleus</keyword>
<keyword id="KW-0656">Proto-oncogene</keyword>
<keyword id="KW-1185">Reference proteome</keyword>
<keyword id="KW-0804">Transcription</keyword>
<keyword id="KW-0805">Transcription regulation</keyword>